<accession>Q99VC2</accession>
<protein>
    <recommendedName>
        <fullName>Uncharacterized protein SAV0968</fullName>
    </recommendedName>
</protein>
<sequence>MKFLSFKYNDKTSYGVKVKREDAVWDLTQVFADFAEGDFHPKTLLAGLQQNHTLDFQEQVRKAVVAAEDSGKAEDYKISFNDIEFLPPVTPPNNVIAFGRNYKDHANELNHEVEKLYVFTKAASSLTGDNATIPNHKDITDQLDYEGELGIVIGKSGEKIPKALALDYVYGYTIINDITDRKAQSEQDQAFLSKSLTGGCPMGPYIVTKDELPLPENVNIVTKVNNEIRQDGNTGEMILKIDELIEEISKYVALHPGDIIATGTPAGVGAGMQPPKFLQPGDEVKVTIDNIGTLTTYIAK</sequence>
<organism>
    <name type="scientific">Staphylococcus aureus (strain Mu50 / ATCC 700699)</name>
    <dbReference type="NCBI Taxonomy" id="158878"/>
    <lineage>
        <taxon>Bacteria</taxon>
        <taxon>Bacillati</taxon>
        <taxon>Bacillota</taxon>
        <taxon>Bacilli</taxon>
        <taxon>Bacillales</taxon>
        <taxon>Staphylococcaceae</taxon>
        <taxon>Staphylococcus</taxon>
    </lineage>
</organism>
<comment type="similarity">
    <text evidence="2">Belongs to the FAH family.</text>
</comment>
<gene>
    <name type="ordered locus">SAV0968</name>
</gene>
<name>Y968_STAAM</name>
<keyword id="KW-0479">Metal-binding</keyword>
<proteinExistence type="inferred from homology"/>
<evidence type="ECO:0000250" key="1"/>
<evidence type="ECO:0000305" key="2"/>
<reference key="1">
    <citation type="journal article" date="2001" name="Lancet">
        <title>Whole genome sequencing of meticillin-resistant Staphylococcus aureus.</title>
        <authorList>
            <person name="Kuroda M."/>
            <person name="Ohta T."/>
            <person name="Uchiyama I."/>
            <person name="Baba T."/>
            <person name="Yuzawa H."/>
            <person name="Kobayashi I."/>
            <person name="Cui L."/>
            <person name="Oguchi A."/>
            <person name="Aoki K."/>
            <person name="Nagai Y."/>
            <person name="Lian J.-Q."/>
            <person name="Ito T."/>
            <person name="Kanamori M."/>
            <person name="Matsumaru H."/>
            <person name="Maruyama A."/>
            <person name="Murakami H."/>
            <person name="Hosoyama A."/>
            <person name="Mizutani-Ui Y."/>
            <person name="Takahashi N.K."/>
            <person name="Sawano T."/>
            <person name="Inoue R."/>
            <person name="Kaito C."/>
            <person name="Sekimizu K."/>
            <person name="Hirakawa H."/>
            <person name="Kuhara S."/>
            <person name="Goto S."/>
            <person name="Yabuzaki J."/>
            <person name="Kanehisa M."/>
            <person name="Yamashita A."/>
            <person name="Oshima K."/>
            <person name="Furuya K."/>
            <person name="Yoshino C."/>
            <person name="Shiba T."/>
            <person name="Hattori M."/>
            <person name="Ogasawara N."/>
            <person name="Hayashi H."/>
            <person name="Hiramatsu K."/>
        </authorList>
    </citation>
    <scope>NUCLEOTIDE SEQUENCE [LARGE SCALE GENOMIC DNA]</scope>
    <source>
        <strain>Mu50 / ATCC 700699</strain>
    </source>
</reference>
<feature type="chain" id="PRO_0000303221" description="Uncharacterized protein SAV0968">
    <location>
        <begin position="1"/>
        <end position="300"/>
    </location>
</feature>
<feature type="binding site" evidence="1">
    <location>
        <position position="146"/>
    </location>
    <ligand>
        <name>a divalent metal cation</name>
        <dbReference type="ChEBI" id="CHEBI:60240"/>
    </ligand>
</feature>
<feature type="binding site" evidence="1">
    <location>
        <position position="148"/>
    </location>
    <ligand>
        <name>a divalent metal cation</name>
        <dbReference type="ChEBI" id="CHEBI:60240"/>
    </ligand>
</feature>
<feature type="binding site" evidence="1">
    <location>
        <position position="177"/>
    </location>
    <ligand>
        <name>a divalent metal cation</name>
        <dbReference type="ChEBI" id="CHEBI:60240"/>
    </ligand>
</feature>
<dbReference type="EMBL" id="BA000017">
    <property type="protein sequence ID" value="BAB57130.1"/>
    <property type="molecule type" value="Genomic_DNA"/>
</dbReference>
<dbReference type="RefSeq" id="WP_000670752.1">
    <property type="nucleotide sequence ID" value="NC_002758.2"/>
</dbReference>
<dbReference type="SMR" id="Q99VC2"/>
<dbReference type="KEGG" id="sav:SAV0968"/>
<dbReference type="HOGENOM" id="CLU_028458_3_1_9"/>
<dbReference type="PhylomeDB" id="Q99VC2"/>
<dbReference type="Proteomes" id="UP000002481">
    <property type="component" value="Chromosome"/>
</dbReference>
<dbReference type="GO" id="GO:0018773">
    <property type="term" value="F:acetylpyruvate hydrolase activity"/>
    <property type="evidence" value="ECO:0007669"/>
    <property type="project" value="TreeGrafter"/>
</dbReference>
<dbReference type="GO" id="GO:0046872">
    <property type="term" value="F:metal ion binding"/>
    <property type="evidence" value="ECO:0007669"/>
    <property type="project" value="UniProtKB-KW"/>
</dbReference>
<dbReference type="FunFam" id="3.90.850.10:FF:000010">
    <property type="entry name" value="FAA hydrolase family protein"/>
    <property type="match status" value="1"/>
</dbReference>
<dbReference type="Gene3D" id="3.90.850.10">
    <property type="entry name" value="Fumarylacetoacetase-like, C-terminal domain"/>
    <property type="match status" value="1"/>
</dbReference>
<dbReference type="InterPro" id="IPR011234">
    <property type="entry name" value="Fumarylacetoacetase-like_C"/>
</dbReference>
<dbReference type="InterPro" id="IPR036663">
    <property type="entry name" value="Fumarylacetoacetase_C_sf"/>
</dbReference>
<dbReference type="PANTHER" id="PTHR11820">
    <property type="entry name" value="ACYLPYRUVASE"/>
    <property type="match status" value="1"/>
</dbReference>
<dbReference type="PANTHER" id="PTHR11820:SF7">
    <property type="entry name" value="ACYLPYRUVASE FAHD1, MITOCHONDRIAL"/>
    <property type="match status" value="1"/>
</dbReference>
<dbReference type="Pfam" id="PF01557">
    <property type="entry name" value="FAA_hydrolase"/>
    <property type="match status" value="1"/>
</dbReference>
<dbReference type="SUPFAM" id="SSF56529">
    <property type="entry name" value="FAH"/>
    <property type="match status" value="1"/>
</dbReference>